<comment type="function">
    <text evidence="1">E3 ubiquitin-protein ligase that plays an essential role in stimulus-induced inositol 1,4,5-trisphosphate receptor (ITPR) ubiquitination and degradation via the endoplasmic reticulum-associated degradation (ERAD) pathway. Also involved in ITPR turnover in resting cells.</text>
</comment>
<comment type="catalytic activity">
    <reaction>
        <text>S-ubiquitinyl-[E2 ubiquitin-conjugating enzyme]-L-cysteine + [acceptor protein]-L-lysine = [E2 ubiquitin-conjugating enzyme]-L-cysteine + N(6)-ubiquitinyl-[acceptor protein]-L-lysine.</text>
        <dbReference type="EC" id="2.3.2.27"/>
    </reaction>
</comment>
<comment type="pathway">
    <text>Protein modification; protein ubiquitination.</text>
</comment>
<comment type="subcellular location">
    <subcellularLocation>
        <location evidence="1">Endoplasmic reticulum membrane</location>
        <topology evidence="1">Multi-pass membrane protein</topology>
    </subcellularLocation>
</comment>
<reference key="1">
    <citation type="submission" date="2004-12" db="EMBL/GenBank/DDBJ databases">
        <authorList>
            <consortium name="NIH - Xenopus Gene Collection (XGC) project"/>
        </authorList>
    </citation>
    <scope>NUCLEOTIDE SEQUENCE [LARGE SCALE MRNA]</scope>
    <source>
        <tissue>Testis</tissue>
    </source>
</reference>
<feature type="chain" id="PRO_0000280703" description="E3 ubiquitin-protein ligase RNF170">
    <location>
        <begin position="1"/>
        <end position="257"/>
    </location>
</feature>
<feature type="topological domain" description="Lumenal" evidence="2">
    <location>
        <begin position="1"/>
        <end position="24"/>
    </location>
</feature>
<feature type="transmembrane region" description="Helical" evidence="2">
    <location>
        <begin position="25"/>
        <end position="45"/>
    </location>
</feature>
<feature type="topological domain" description="Cytoplasmic" evidence="2">
    <location>
        <begin position="46"/>
        <end position="200"/>
    </location>
</feature>
<feature type="transmembrane region" description="Helical" evidence="2">
    <location>
        <begin position="201"/>
        <end position="221"/>
    </location>
</feature>
<feature type="topological domain" description="Lumenal" evidence="2">
    <location>
        <position position="222"/>
    </location>
</feature>
<feature type="transmembrane region" description="Helical" evidence="2">
    <location>
        <begin position="223"/>
        <end position="243"/>
    </location>
</feature>
<feature type="topological domain" description="Cytoplasmic" evidence="2">
    <location>
        <begin position="244"/>
        <end position="257"/>
    </location>
</feature>
<feature type="zinc finger region" description="RING-type" evidence="3">
    <location>
        <begin position="87"/>
        <end position="130"/>
    </location>
</feature>
<protein>
    <recommendedName>
        <fullName>E3 ubiquitin-protein ligase RNF170</fullName>
        <ecNumber>2.3.2.27</ecNumber>
    </recommendedName>
    <alternativeName>
        <fullName>RING finger protein 170</fullName>
    </alternativeName>
    <alternativeName>
        <fullName evidence="4">RING-type E3 ubiquitin transferase RNF170</fullName>
    </alternativeName>
</protein>
<proteinExistence type="evidence at transcript level"/>
<sequence length="257" mass="29484">MADNQEERPHFPLDEGSIIEGVSDQVIVVVLLSFVAVGSLIYLLLRNDEQNIHPENQDRVRAVREQLQNEQETPAPPRPQFYSDMTCPVCLQQATFPVETNCGHLFCGSCIIAYWRYGTWLGAINCPICRQTVTLLFPLFGATDQEDAQNILQEATGYNRRFSGQPRSLMDRIMDLPTLLRHAFREMFSVGGLFWMFRIRIVLCLLGALLYLVSPLDIIPEALFGILGFLDDLFVLFLLLIYISIMYREVVTQRLYR</sequence>
<evidence type="ECO:0000250" key="1">
    <source>
        <dbReference type="UniProtKB" id="Q96K19"/>
    </source>
</evidence>
<evidence type="ECO:0000255" key="2"/>
<evidence type="ECO:0000255" key="3">
    <source>
        <dbReference type="PROSITE-ProRule" id="PRU00175"/>
    </source>
</evidence>
<evidence type="ECO:0000305" key="4"/>
<gene>
    <name type="primary">rnf170</name>
</gene>
<accession>Q5PPX5</accession>
<name>RN170_XENLA</name>
<dbReference type="EC" id="2.3.2.27"/>
<dbReference type="EMBL" id="BC087450">
    <property type="protein sequence ID" value="AAH87450.1"/>
    <property type="molecule type" value="mRNA"/>
</dbReference>
<dbReference type="RefSeq" id="NP_001088785.1">
    <property type="nucleotide sequence ID" value="NM_001095316.1"/>
</dbReference>
<dbReference type="RefSeq" id="XP_018104407.1">
    <property type="nucleotide sequence ID" value="XM_018248918.1"/>
</dbReference>
<dbReference type="RefSeq" id="XP_018104416.1">
    <property type="nucleotide sequence ID" value="XM_018248927.1"/>
</dbReference>
<dbReference type="RefSeq" id="XP_018104426.1">
    <property type="nucleotide sequence ID" value="XM_018248937.1"/>
</dbReference>
<dbReference type="DNASU" id="496050"/>
<dbReference type="GeneID" id="496050"/>
<dbReference type="KEGG" id="xla:496050"/>
<dbReference type="AGR" id="Xenbase:XB-GENE-5789603"/>
<dbReference type="CTD" id="496050"/>
<dbReference type="Xenbase" id="XB-GENE-5789603">
    <property type="gene designation" value="rnf170.L"/>
</dbReference>
<dbReference type="OMA" id="CRQEEQN"/>
<dbReference type="OrthoDB" id="9049620at2759"/>
<dbReference type="UniPathway" id="UPA00143"/>
<dbReference type="Proteomes" id="UP000186698">
    <property type="component" value="Chromosome 1L"/>
</dbReference>
<dbReference type="Bgee" id="496050">
    <property type="expression patterns" value="Expressed in zone of skin and 19 other cell types or tissues"/>
</dbReference>
<dbReference type="GO" id="GO:0005789">
    <property type="term" value="C:endoplasmic reticulum membrane"/>
    <property type="evidence" value="ECO:0007669"/>
    <property type="project" value="UniProtKB-SubCell"/>
</dbReference>
<dbReference type="GO" id="GO:0061630">
    <property type="term" value="F:ubiquitin protein ligase activity"/>
    <property type="evidence" value="ECO:0007669"/>
    <property type="project" value="InterPro"/>
</dbReference>
<dbReference type="GO" id="GO:0008270">
    <property type="term" value="F:zinc ion binding"/>
    <property type="evidence" value="ECO:0007669"/>
    <property type="project" value="UniProtKB-KW"/>
</dbReference>
<dbReference type="GO" id="GO:0016567">
    <property type="term" value="P:protein ubiquitination"/>
    <property type="evidence" value="ECO:0007669"/>
    <property type="project" value="UniProtKB-UniPathway"/>
</dbReference>
<dbReference type="CDD" id="cd16553">
    <property type="entry name" value="RING-HC_RNF170"/>
    <property type="match status" value="1"/>
</dbReference>
<dbReference type="Gene3D" id="3.30.40.10">
    <property type="entry name" value="Zinc/RING finger domain, C3HC4 (zinc finger)"/>
    <property type="match status" value="1"/>
</dbReference>
<dbReference type="InterPro" id="IPR010652">
    <property type="entry name" value="DUF1232"/>
</dbReference>
<dbReference type="InterPro" id="IPR038896">
    <property type="entry name" value="RNF170"/>
</dbReference>
<dbReference type="InterPro" id="IPR027370">
    <property type="entry name" value="Znf-RING_euk"/>
</dbReference>
<dbReference type="InterPro" id="IPR001841">
    <property type="entry name" value="Znf_RING"/>
</dbReference>
<dbReference type="InterPro" id="IPR013083">
    <property type="entry name" value="Znf_RING/FYVE/PHD"/>
</dbReference>
<dbReference type="InterPro" id="IPR017907">
    <property type="entry name" value="Znf_RING_CS"/>
</dbReference>
<dbReference type="PANTHER" id="PTHR22894:SF1">
    <property type="entry name" value="E3 UBIQUITIN-PROTEIN LIGASE RNF170"/>
    <property type="match status" value="1"/>
</dbReference>
<dbReference type="PANTHER" id="PTHR22894">
    <property type="entry name" value="RING-TYPE DOMAIN-CONTAINING PROTEIN"/>
    <property type="match status" value="1"/>
</dbReference>
<dbReference type="Pfam" id="PF06803">
    <property type="entry name" value="DUF1232"/>
    <property type="match status" value="1"/>
</dbReference>
<dbReference type="Pfam" id="PF13445">
    <property type="entry name" value="zf-RING_UBOX"/>
    <property type="match status" value="1"/>
</dbReference>
<dbReference type="SMART" id="SM00184">
    <property type="entry name" value="RING"/>
    <property type="match status" value="1"/>
</dbReference>
<dbReference type="SUPFAM" id="SSF57850">
    <property type="entry name" value="RING/U-box"/>
    <property type="match status" value="1"/>
</dbReference>
<dbReference type="PROSITE" id="PS00518">
    <property type="entry name" value="ZF_RING_1"/>
    <property type="match status" value="1"/>
</dbReference>
<dbReference type="PROSITE" id="PS50089">
    <property type="entry name" value="ZF_RING_2"/>
    <property type="match status" value="1"/>
</dbReference>
<organism>
    <name type="scientific">Xenopus laevis</name>
    <name type="common">African clawed frog</name>
    <dbReference type="NCBI Taxonomy" id="8355"/>
    <lineage>
        <taxon>Eukaryota</taxon>
        <taxon>Metazoa</taxon>
        <taxon>Chordata</taxon>
        <taxon>Craniata</taxon>
        <taxon>Vertebrata</taxon>
        <taxon>Euteleostomi</taxon>
        <taxon>Amphibia</taxon>
        <taxon>Batrachia</taxon>
        <taxon>Anura</taxon>
        <taxon>Pipoidea</taxon>
        <taxon>Pipidae</taxon>
        <taxon>Xenopodinae</taxon>
        <taxon>Xenopus</taxon>
        <taxon>Xenopus</taxon>
    </lineage>
</organism>
<keyword id="KW-0256">Endoplasmic reticulum</keyword>
<keyword id="KW-0472">Membrane</keyword>
<keyword id="KW-0479">Metal-binding</keyword>
<keyword id="KW-1185">Reference proteome</keyword>
<keyword id="KW-0808">Transferase</keyword>
<keyword id="KW-0812">Transmembrane</keyword>
<keyword id="KW-1133">Transmembrane helix</keyword>
<keyword id="KW-0833">Ubl conjugation pathway</keyword>
<keyword id="KW-0862">Zinc</keyword>
<keyword id="KW-0863">Zinc-finger</keyword>